<accession>B7M2F1</accession>
<proteinExistence type="inferred from homology"/>
<feature type="chain" id="PRO_1000195223" description="Holliday junction branch migration complex subunit RuvB">
    <location>
        <begin position="1"/>
        <end position="336"/>
    </location>
</feature>
<feature type="region of interest" description="Large ATPase domain (RuvB-L)" evidence="1">
    <location>
        <begin position="4"/>
        <end position="184"/>
    </location>
</feature>
<feature type="region of interest" description="Small ATPAse domain (RuvB-S)" evidence="1">
    <location>
        <begin position="185"/>
        <end position="255"/>
    </location>
</feature>
<feature type="region of interest" description="Head domain (RuvB-H)" evidence="1">
    <location>
        <begin position="258"/>
        <end position="336"/>
    </location>
</feature>
<feature type="binding site" evidence="1">
    <location>
        <position position="23"/>
    </location>
    <ligand>
        <name>ATP</name>
        <dbReference type="ChEBI" id="CHEBI:30616"/>
    </ligand>
</feature>
<feature type="binding site" evidence="1">
    <location>
        <position position="24"/>
    </location>
    <ligand>
        <name>ATP</name>
        <dbReference type="ChEBI" id="CHEBI:30616"/>
    </ligand>
</feature>
<feature type="binding site" evidence="1">
    <location>
        <position position="65"/>
    </location>
    <ligand>
        <name>ATP</name>
        <dbReference type="ChEBI" id="CHEBI:30616"/>
    </ligand>
</feature>
<feature type="binding site" evidence="1">
    <location>
        <position position="68"/>
    </location>
    <ligand>
        <name>ATP</name>
        <dbReference type="ChEBI" id="CHEBI:30616"/>
    </ligand>
</feature>
<feature type="binding site" evidence="1">
    <location>
        <position position="69"/>
    </location>
    <ligand>
        <name>ATP</name>
        <dbReference type="ChEBI" id="CHEBI:30616"/>
    </ligand>
</feature>
<feature type="binding site" evidence="1">
    <location>
        <position position="69"/>
    </location>
    <ligand>
        <name>Mg(2+)</name>
        <dbReference type="ChEBI" id="CHEBI:18420"/>
    </ligand>
</feature>
<feature type="binding site" evidence="1">
    <location>
        <position position="70"/>
    </location>
    <ligand>
        <name>ATP</name>
        <dbReference type="ChEBI" id="CHEBI:30616"/>
    </ligand>
</feature>
<feature type="binding site" evidence="1">
    <location>
        <begin position="131"/>
        <end position="133"/>
    </location>
    <ligand>
        <name>ATP</name>
        <dbReference type="ChEBI" id="CHEBI:30616"/>
    </ligand>
</feature>
<feature type="binding site" evidence="1">
    <location>
        <position position="174"/>
    </location>
    <ligand>
        <name>ATP</name>
        <dbReference type="ChEBI" id="CHEBI:30616"/>
    </ligand>
</feature>
<feature type="binding site" evidence="1">
    <location>
        <position position="184"/>
    </location>
    <ligand>
        <name>ATP</name>
        <dbReference type="ChEBI" id="CHEBI:30616"/>
    </ligand>
</feature>
<feature type="binding site" evidence="1">
    <location>
        <position position="221"/>
    </location>
    <ligand>
        <name>ATP</name>
        <dbReference type="ChEBI" id="CHEBI:30616"/>
    </ligand>
</feature>
<feature type="binding site" evidence="1">
    <location>
        <position position="294"/>
    </location>
    <ligand>
        <name>DNA</name>
        <dbReference type="ChEBI" id="CHEBI:16991"/>
    </ligand>
</feature>
<feature type="binding site" evidence="1">
    <location>
        <position position="313"/>
    </location>
    <ligand>
        <name>DNA</name>
        <dbReference type="ChEBI" id="CHEBI:16991"/>
    </ligand>
</feature>
<feature type="binding site" evidence="1">
    <location>
        <position position="318"/>
    </location>
    <ligand>
        <name>DNA</name>
        <dbReference type="ChEBI" id="CHEBI:16991"/>
    </ligand>
</feature>
<name>RUVB_ECO8A</name>
<reference key="1">
    <citation type="journal article" date="2009" name="PLoS Genet.">
        <title>Organised genome dynamics in the Escherichia coli species results in highly diverse adaptive paths.</title>
        <authorList>
            <person name="Touchon M."/>
            <person name="Hoede C."/>
            <person name="Tenaillon O."/>
            <person name="Barbe V."/>
            <person name="Baeriswyl S."/>
            <person name="Bidet P."/>
            <person name="Bingen E."/>
            <person name="Bonacorsi S."/>
            <person name="Bouchier C."/>
            <person name="Bouvet O."/>
            <person name="Calteau A."/>
            <person name="Chiapello H."/>
            <person name="Clermont O."/>
            <person name="Cruveiller S."/>
            <person name="Danchin A."/>
            <person name="Diard M."/>
            <person name="Dossat C."/>
            <person name="Karoui M.E."/>
            <person name="Frapy E."/>
            <person name="Garry L."/>
            <person name="Ghigo J.M."/>
            <person name="Gilles A.M."/>
            <person name="Johnson J."/>
            <person name="Le Bouguenec C."/>
            <person name="Lescat M."/>
            <person name="Mangenot S."/>
            <person name="Martinez-Jehanne V."/>
            <person name="Matic I."/>
            <person name="Nassif X."/>
            <person name="Oztas S."/>
            <person name="Petit M.A."/>
            <person name="Pichon C."/>
            <person name="Rouy Z."/>
            <person name="Ruf C.S."/>
            <person name="Schneider D."/>
            <person name="Tourret J."/>
            <person name="Vacherie B."/>
            <person name="Vallenet D."/>
            <person name="Medigue C."/>
            <person name="Rocha E.P.C."/>
            <person name="Denamur E."/>
        </authorList>
    </citation>
    <scope>NUCLEOTIDE SEQUENCE [LARGE SCALE GENOMIC DNA]</scope>
    <source>
        <strain>IAI1</strain>
    </source>
</reference>
<evidence type="ECO:0000255" key="1">
    <source>
        <dbReference type="HAMAP-Rule" id="MF_00016"/>
    </source>
</evidence>
<comment type="function">
    <text evidence="1">The RuvA-RuvB-RuvC complex processes Holliday junction (HJ) DNA during genetic recombination and DNA repair, while the RuvA-RuvB complex plays an important role in the rescue of blocked DNA replication forks via replication fork reversal (RFR). RuvA specifically binds to HJ cruciform DNA, conferring on it an open structure. The RuvB hexamer acts as an ATP-dependent pump, pulling dsDNA into and through the RuvAB complex. RuvB forms 2 homohexamers on either side of HJ DNA bound by 1 or 2 RuvA tetramers; 4 subunits per hexamer contact DNA at a time. Coordinated motions by a converter formed by DNA-disengaged RuvB subunits stimulates ATP hydrolysis and nucleotide exchange. Immobilization of the converter enables RuvB to convert the ATP-contained energy into a lever motion, pulling 2 nucleotides of DNA out of the RuvA tetramer per ATP hydrolyzed, thus driving DNA branch migration. The RuvB motors rotate together with the DNA substrate, which together with the progressing nucleotide cycle form the mechanistic basis for DNA recombination by continuous HJ branch migration. Branch migration allows RuvC to scan DNA until it finds its consensus sequence, where it cleaves and resolves cruciform DNA.</text>
</comment>
<comment type="catalytic activity">
    <reaction evidence="1">
        <text>ATP + H2O = ADP + phosphate + H(+)</text>
        <dbReference type="Rhea" id="RHEA:13065"/>
        <dbReference type="ChEBI" id="CHEBI:15377"/>
        <dbReference type="ChEBI" id="CHEBI:15378"/>
        <dbReference type="ChEBI" id="CHEBI:30616"/>
        <dbReference type="ChEBI" id="CHEBI:43474"/>
        <dbReference type="ChEBI" id="CHEBI:456216"/>
    </reaction>
</comment>
<comment type="subunit">
    <text evidence="1">Homohexamer. Forms an RuvA(8)-RuvB(12)-Holliday junction (HJ) complex. HJ DNA is sandwiched between 2 RuvA tetramers; dsDNA enters through RuvA and exits via RuvB. An RuvB hexamer assembles on each DNA strand where it exits the tetramer. Each RuvB hexamer is contacted by two RuvA subunits (via domain III) on 2 adjacent RuvB subunits; this complex drives branch migration. In the full resolvosome a probable DNA-RuvA(4)-RuvB(12)-RuvC(2) complex forms which resolves the HJ.</text>
</comment>
<comment type="subcellular location">
    <subcellularLocation>
        <location evidence="1">Cytoplasm</location>
    </subcellularLocation>
</comment>
<comment type="domain">
    <text evidence="1">Has 3 domains, the large (RuvB-L) and small ATPase (RuvB-S) domains and the C-terminal head (RuvB-H) domain. The head domain binds DNA, while the ATPase domains jointly bind ATP, ADP or are empty depending on the state of the subunit in the translocation cycle. During a single DNA translocation step the structure of each domain remains the same, but their relative positions change.</text>
</comment>
<comment type="similarity">
    <text evidence="1">Belongs to the RuvB family.</text>
</comment>
<keyword id="KW-0067">ATP-binding</keyword>
<keyword id="KW-0963">Cytoplasm</keyword>
<keyword id="KW-0227">DNA damage</keyword>
<keyword id="KW-0233">DNA recombination</keyword>
<keyword id="KW-0234">DNA repair</keyword>
<keyword id="KW-0238">DNA-binding</keyword>
<keyword id="KW-0378">Hydrolase</keyword>
<keyword id="KW-0547">Nucleotide-binding</keyword>
<keyword id="KW-0742">SOS response</keyword>
<gene>
    <name evidence="1" type="primary">ruvB</name>
    <name type="ordered locus">ECIAI1_1947</name>
</gene>
<dbReference type="EC" id="3.6.4.-" evidence="1"/>
<dbReference type="EMBL" id="CU928160">
    <property type="protein sequence ID" value="CAQ98800.1"/>
    <property type="molecule type" value="Genomic_DNA"/>
</dbReference>
<dbReference type="RefSeq" id="WP_000568519.1">
    <property type="nucleotide sequence ID" value="NC_011741.1"/>
</dbReference>
<dbReference type="SMR" id="B7M2F1"/>
<dbReference type="GeneID" id="75202735"/>
<dbReference type="KEGG" id="ecr:ECIAI1_1947"/>
<dbReference type="HOGENOM" id="CLU_055599_1_0_6"/>
<dbReference type="GO" id="GO:0005737">
    <property type="term" value="C:cytoplasm"/>
    <property type="evidence" value="ECO:0007669"/>
    <property type="project" value="UniProtKB-SubCell"/>
</dbReference>
<dbReference type="GO" id="GO:0048476">
    <property type="term" value="C:Holliday junction resolvase complex"/>
    <property type="evidence" value="ECO:0007669"/>
    <property type="project" value="UniProtKB-UniRule"/>
</dbReference>
<dbReference type="GO" id="GO:0005524">
    <property type="term" value="F:ATP binding"/>
    <property type="evidence" value="ECO:0007669"/>
    <property type="project" value="UniProtKB-UniRule"/>
</dbReference>
<dbReference type="GO" id="GO:0016887">
    <property type="term" value="F:ATP hydrolysis activity"/>
    <property type="evidence" value="ECO:0007669"/>
    <property type="project" value="InterPro"/>
</dbReference>
<dbReference type="GO" id="GO:0000400">
    <property type="term" value="F:four-way junction DNA binding"/>
    <property type="evidence" value="ECO:0007669"/>
    <property type="project" value="UniProtKB-UniRule"/>
</dbReference>
<dbReference type="GO" id="GO:0009378">
    <property type="term" value="F:four-way junction helicase activity"/>
    <property type="evidence" value="ECO:0007669"/>
    <property type="project" value="InterPro"/>
</dbReference>
<dbReference type="GO" id="GO:0006310">
    <property type="term" value="P:DNA recombination"/>
    <property type="evidence" value="ECO:0007669"/>
    <property type="project" value="UniProtKB-UniRule"/>
</dbReference>
<dbReference type="GO" id="GO:0006281">
    <property type="term" value="P:DNA repair"/>
    <property type="evidence" value="ECO:0007669"/>
    <property type="project" value="UniProtKB-UniRule"/>
</dbReference>
<dbReference type="GO" id="GO:0009432">
    <property type="term" value="P:SOS response"/>
    <property type="evidence" value="ECO:0007669"/>
    <property type="project" value="UniProtKB-UniRule"/>
</dbReference>
<dbReference type="CDD" id="cd00009">
    <property type="entry name" value="AAA"/>
    <property type="match status" value="1"/>
</dbReference>
<dbReference type="FunFam" id="1.10.10.10:FF:000086">
    <property type="entry name" value="Holliday junction ATP-dependent DNA helicase RuvB"/>
    <property type="match status" value="1"/>
</dbReference>
<dbReference type="FunFam" id="1.10.8.60:FF:000023">
    <property type="entry name" value="Holliday junction ATP-dependent DNA helicase RuvB"/>
    <property type="match status" value="1"/>
</dbReference>
<dbReference type="FunFam" id="3.40.50.300:FF:000073">
    <property type="entry name" value="Holliday junction ATP-dependent DNA helicase RuvB"/>
    <property type="match status" value="1"/>
</dbReference>
<dbReference type="Gene3D" id="1.10.8.60">
    <property type="match status" value="1"/>
</dbReference>
<dbReference type="Gene3D" id="3.40.50.300">
    <property type="entry name" value="P-loop containing nucleotide triphosphate hydrolases"/>
    <property type="match status" value="1"/>
</dbReference>
<dbReference type="Gene3D" id="1.10.10.10">
    <property type="entry name" value="Winged helix-like DNA-binding domain superfamily/Winged helix DNA-binding domain"/>
    <property type="match status" value="1"/>
</dbReference>
<dbReference type="HAMAP" id="MF_00016">
    <property type="entry name" value="DNA_HJ_migration_RuvB"/>
    <property type="match status" value="1"/>
</dbReference>
<dbReference type="InterPro" id="IPR003593">
    <property type="entry name" value="AAA+_ATPase"/>
</dbReference>
<dbReference type="InterPro" id="IPR041445">
    <property type="entry name" value="AAA_lid_4"/>
</dbReference>
<dbReference type="InterPro" id="IPR004605">
    <property type="entry name" value="DNA_helicase_Holl-junc_RuvB"/>
</dbReference>
<dbReference type="InterPro" id="IPR027417">
    <property type="entry name" value="P-loop_NTPase"/>
</dbReference>
<dbReference type="InterPro" id="IPR008824">
    <property type="entry name" value="RuvB-like_N"/>
</dbReference>
<dbReference type="InterPro" id="IPR008823">
    <property type="entry name" value="RuvB_C"/>
</dbReference>
<dbReference type="InterPro" id="IPR036388">
    <property type="entry name" value="WH-like_DNA-bd_sf"/>
</dbReference>
<dbReference type="InterPro" id="IPR036390">
    <property type="entry name" value="WH_DNA-bd_sf"/>
</dbReference>
<dbReference type="NCBIfam" id="NF000868">
    <property type="entry name" value="PRK00080.1"/>
    <property type="match status" value="1"/>
</dbReference>
<dbReference type="NCBIfam" id="TIGR00635">
    <property type="entry name" value="ruvB"/>
    <property type="match status" value="1"/>
</dbReference>
<dbReference type="PANTHER" id="PTHR42848">
    <property type="match status" value="1"/>
</dbReference>
<dbReference type="PANTHER" id="PTHR42848:SF1">
    <property type="entry name" value="HOLLIDAY JUNCTION BRANCH MIGRATION COMPLEX SUBUNIT RUVB"/>
    <property type="match status" value="1"/>
</dbReference>
<dbReference type="Pfam" id="PF17864">
    <property type="entry name" value="AAA_lid_4"/>
    <property type="match status" value="1"/>
</dbReference>
<dbReference type="Pfam" id="PF05491">
    <property type="entry name" value="RuvB_C"/>
    <property type="match status" value="1"/>
</dbReference>
<dbReference type="Pfam" id="PF05496">
    <property type="entry name" value="RuvB_N"/>
    <property type="match status" value="1"/>
</dbReference>
<dbReference type="SMART" id="SM00382">
    <property type="entry name" value="AAA"/>
    <property type="match status" value="1"/>
</dbReference>
<dbReference type="SUPFAM" id="SSF52540">
    <property type="entry name" value="P-loop containing nucleoside triphosphate hydrolases"/>
    <property type="match status" value="1"/>
</dbReference>
<dbReference type="SUPFAM" id="SSF46785">
    <property type="entry name" value="Winged helix' DNA-binding domain"/>
    <property type="match status" value="1"/>
</dbReference>
<protein>
    <recommendedName>
        <fullName evidence="1">Holliday junction branch migration complex subunit RuvB</fullName>
        <ecNumber evidence="1">3.6.4.-</ecNumber>
    </recommendedName>
</protein>
<organism>
    <name type="scientific">Escherichia coli O8 (strain IAI1)</name>
    <dbReference type="NCBI Taxonomy" id="585034"/>
    <lineage>
        <taxon>Bacteria</taxon>
        <taxon>Pseudomonadati</taxon>
        <taxon>Pseudomonadota</taxon>
        <taxon>Gammaproteobacteria</taxon>
        <taxon>Enterobacterales</taxon>
        <taxon>Enterobacteriaceae</taxon>
        <taxon>Escherichia</taxon>
    </lineage>
</organism>
<sequence>MIEADRLISAGTTLPEDVADRAIRPKLLEEYVGQPQVRSQMEIFIKAAKLRGDALDHLLIFGPPGLGKTTLANIVANEMGVNLRTTSGPVLEKAGDLAAMLTNLEPHDVLFIDEIHRLSPVVEEVLYPAMEDYQLDIMIGEGPAARSIKIDLPPFTLIGATTRAGSLTSPLRDRFGIVQRLEFYQVPDLQYIVSRSARFMGLEMSDDGALEVARRARGTPRIANRLLRRVRDFAEVKHDGTISADIAAQALDMLNVDAEGFDYMDRKLLLAVIDKFFGGPVGLDNLAAAIGEERETIEDVLEPYLIQQGFLQRTPRGRMATTRAWNHFGITPPEMP</sequence>